<reference key="1">
    <citation type="journal article" date="2008" name="J. Bacteriol.">
        <title>The complete genome sequence of Actinobacillus pleuropneumoniae L20 (serotype 5b).</title>
        <authorList>
            <person name="Foote S.J."/>
            <person name="Bosse J.T."/>
            <person name="Bouevitch A.B."/>
            <person name="Langford P.R."/>
            <person name="Young N.M."/>
            <person name="Nash J.H.E."/>
        </authorList>
    </citation>
    <scope>NUCLEOTIDE SEQUENCE [LARGE SCALE GENOMIC DNA]</scope>
    <source>
        <strain>L20</strain>
    </source>
</reference>
<accession>A3MY75</accession>
<sequence>MPLSRLIINNFRNLQSLDLELSPNFNFIVGHNGSGKTSLLEAIFYLGHGRSFKSHISNRIIHYQAEDFVLHARIDEGQHQWSVGIQKKRSGDTLLKINGEDGNKISDLAHLLPMQVITPEGLTLLNGGPTFRRAFLDWGLFHQYTEFYSCWANLKRLLKQRNAALHQVRSYAELKPWDTELAKLAEIVSQMRANYAEALRPEIEKTCQFFLPELEIGVSFHQGWEKGTDYAEILAQGFERDKAMGYTMIGPQKADFRFRANGLPVEDVLSRGQLKLLMCVLRLAQGEYLVAQKERQCLFLIDDFASELDPIKRELLAHRLRESGSQVFVTAITKDQLNQMQWQESEQDSLFQVQQGMLTK</sequence>
<keyword id="KW-0067">ATP-binding</keyword>
<keyword id="KW-0963">Cytoplasm</keyword>
<keyword id="KW-0227">DNA damage</keyword>
<keyword id="KW-0234">DNA repair</keyword>
<keyword id="KW-0235">DNA replication</keyword>
<keyword id="KW-0238">DNA-binding</keyword>
<keyword id="KW-0547">Nucleotide-binding</keyword>
<keyword id="KW-1185">Reference proteome</keyword>
<keyword id="KW-0742">SOS response</keyword>
<gene>
    <name evidence="1" type="primary">recF</name>
    <name type="ordered locus">APL_0003</name>
</gene>
<evidence type="ECO:0000255" key="1">
    <source>
        <dbReference type="HAMAP-Rule" id="MF_00365"/>
    </source>
</evidence>
<organism>
    <name type="scientific">Actinobacillus pleuropneumoniae serotype 5b (strain L20)</name>
    <dbReference type="NCBI Taxonomy" id="416269"/>
    <lineage>
        <taxon>Bacteria</taxon>
        <taxon>Pseudomonadati</taxon>
        <taxon>Pseudomonadota</taxon>
        <taxon>Gammaproteobacteria</taxon>
        <taxon>Pasteurellales</taxon>
        <taxon>Pasteurellaceae</taxon>
        <taxon>Actinobacillus</taxon>
    </lineage>
</organism>
<proteinExistence type="inferred from homology"/>
<protein>
    <recommendedName>
        <fullName evidence="1">DNA replication and repair protein RecF</fullName>
    </recommendedName>
</protein>
<feature type="chain" id="PRO_1000048499" description="DNA replication and repair protein RecF">
    <location>
        <begin position="1"/>
        <end position="360"/>
    </location>
</feature>
<feature type="binding site" evidence="1">
    <location>
        <begin position="30"/>
        <end position="37"/>
    </location>
    <ligand>
        <name>ATP</name>
        <dbReference type="ChEBI" id="CHEBI:30616"/>
    </ligand>
</feature>
<dbReference type="EMBL" id="CP000569">
    <property type="protein sequence ID" value="ABN73111.1"/>
    <property type="molecule type" value="Genomic_DNA"/>
</dbReference>
<dbReference type="RefSeq" id="WP_009874747.1">
    <property type="nucleotide sequence ID" value="NC_009053.1"/>
</dbReference>
<dbReference type="SMR" id="A3MY75"/>
<dbReference type="STRING" id="416269.APL_0003"/>
<dbReference type="EnsemblBacteria" id="ABN73111">
    <property type="protein sequence ID" value="ABN73111"/>
    <property type="gene ID" value="APL_0003"/>
</dbReference>
<dbReference type="KEGG" id="apl:APL_0003"/>
<dbReference type="PATRIC" id="fig|416269.6.peg.3"/>
<dbReference type="eggNOG" id="COG1195">
    <property type="taxonomic scope" value="Bacteria"/>
</dbReference>
<dbReference type="HOGENOM" id="CLU_040267_0_0_6"/>
<dbReference type="Proteomes" id="UP000001432">
    <property type="component" value="Chromosome"/>
</dbReference>
<dbReference type="GO" id="GO:0005737">
    <property type="term" value="C:cytoplasm"/>
    <property type="evidence" value="ECO:0007669"/>
    <property type="project" value="UniProtKB-SubCell"/>
</dbReference>
<dbReference type="GO" id="GO:0005524">
    <property type="term" value="F:ATP binding"/>
    <property type="evidence" value="ECO:0007669"/>
    <property type="project" value="UniProtKB-UniRule"/>
</dbReference>
<dbReference type="GO" id="GO:0003697">
    <property type="term" value="F:single-stranded DNA binding"/>
    <property type="evidence" value="ECO:0007669"/>
    <property type="project" value="UniProtKB-UniRule"/>
</dbReference>
<dbReference type="GO" id="GO:0006260">
    <property type="term" value="P:DNA replication"/>
    <property type="evidence" value="ECO:0007669"/>
    <property type="project" value="UniProtKB-UniRule"/>
</dbReference>
<dbReference type="GO" id="GO:0000731">
    <property type="term" value="P:DNA synthesis involved in DNA repair"/>
    <property type="evidence" value="ECO:0007669"/>
    <property type="project" value="TreeGrafter"/>
</dbReference>
<dbReference type="GO" id="GO:0006302">
    <property type="term" value="P:double-strand break repair"/>
    <property type="evidence" value="ECO:0007669"/>
    <property type="project" value="TreeGrafter"/>
</dbReference>
<dbReference type="GO" id="GO:0009432">
    <property type="term" value="P:SOS response"/>
    <property type="evidence" value="ECO:0007669"/>
    <property type="project" value="UniProtKB-UniRule"/>
</dbReference>
<dbReference type="FunFam" id="1.20.1050.90:FF:000001">
    <property type="entry name" value="DNA replication and repair protein RecF"/>
    <property type="match status" value="1"/>
</dbReference>
<dbReference type="Gene3D" id="3.40.50.300">
    <property type="entry name" value="P-loop containing nucleotide triphosphate hydrolases"/>
    <property type="match status" value="1"/>
</dbReference>
<dbReference type="Gene3D" id="1.20.1050.90">
    <property type="entry name" value="RecF/RecN/SMC, N-terminal domain"/>
    <property type="match status" value="1"/>
</dbReference>
<dbReference type="HAMAP" id="MF_00365">
    <property type="entry name" value="RecF"/>
    <property type="match status" value="1"/>
</dbReference>
<dbReference type="InterPro" id="IPR001238">
    <property type="entry name" value="DNA-binding_RecF"/>
</dbReference>
<dbReference type="InterPro" id="IPR018078">
    <property type="entry name" value="DNA-binding_RecF_CS"/>
</dbReference>
<dbReference type="InterPro" id="IPR027417">
    <property type="entry name" value="P-loop_NTPase"/>
</dbReference>
<dbReference type="InterPro" id="IPR003395">
    <property type="entry name" value="RecF/RecN/SMC_N"/>
</dbReference>
<dbReference type="InterPro" id="IPR042174">
    <property type="entry name" value="RecF_2"/>
</dbReference>
<dbReference type="NCBIfam" id="TIGR00611">
    <property type="entry name" value="recf"/>
    <property type="match status" value="1"/>
</dbReference>
<dbReference type="PANTHER" id="PTHR32182">
    <property type="entry name" value="DNA REPLICATION AND REPAIR PROTEIN RECF"/>
    <property type="match status" value="1"/>
</dbReference>
<dbReference type="PANTHER" id="PTHR32182:SF0">
    <property type="entry name" value="DNA REPLICATION AND REPAIR PROTEIN RECF"/>
    <property type="match status" value="1"/>
</dbReference>
<dbReference type="Pfam" id="PF02463">
    <property type="entry name" value="SMC_N"/>
    <property type="match status" value="1"/>
</dbReference>
<dbReference type="SUPFAM" id="SSF52540">
    <property type="entry name" value="P-loop containing nucleoside triphosphate hydrolases"/>
    <property type="match status" value="1"/>
</dbReference>
<dbReference type="PROSITE" id="PS00617">
    <property type="entry name" value="RECF_1"/>
    <property type="match status" value="1"/>
</dbReference>
<dbReference type="PROSITE" id="PS00618">
    <property type="entry name" value="RECF_2"/>
    <property type="match status" value="1"/>
</dbReference>
<name>RECF_ACTP2</name>
<comment type="function">
    <text evidence="1">The RecF protein is involved in DNA metabolism; it is required for DNA replication and normal SOS inducibility. RecF binds preferentially to single-stranded, linear DNA. It also seems to bind ATP.</text>
</comment>
<comment type="subcellular location">
    <subcellularLocation>
        <location evidence="1">Cytoplasm</location>
    </subcellularLocation>
</comment>
<comment type="similarity">
    <text evidence="1">Belongs to the RecF family.</text>
</comment>